<sequence>MSMVYMNIMLAFTMSLIGLLMYRSHLMSSLLCLEGMMLSLFVMASLMILSTHFTLASMMPIILLVFAACEAALGLALLVMISNTYGTDYVQNLNLLQC</sequence>
<organism>
    <name type="scientific">Vicugna pacos</name>
    <name type="common">Alpaca</name>
    <name type="synonym">Lama pacos</name>
    <dbReference type="NCBI Taxonomy" id="30538"/>
    <lineage>
        <taxon>Eukaryota</taxon>
        <taxon>Metazoa</taxon>
        <taxon>Chordata</taxon>
        <taxon>Craniata</taxon>
        <taxon>Vertebrata</taxon>
        <taxon>Euteleostomi</taxon>
        <taxon>Mammalia</taxon>
        <taxon>Eutheria</taxon>
        <taxon>Laurasiatheria</taxon>
        <taxon>Artiodactyla</taxon>
        <taxon>Tylopoda</taxon>
        <taxon>Camelidae</taxon>
        <taxon>Vicugna</taxon>
    </lineage>
</organism>
<accession>Q9MEI2</accession>
<comment type="function">
    <text evidence="1">Core subunit of the mitochondrial membrane respiratory chain NADH dehydrogenase (Complex I) which catalyzes electron transfer from NADH through the respiratory chain, using ubiquinone as an electron acceptor. Part of the enzyme membrane arm which is embedded in the lipid bilayer and involved in proton translocation.</text>
</comment>
<comment type="catalytic activity">
    <reaction evidence="1">
        <text>a ubiquinone + NADH + 5 H(+)(in) = a ubiquinol + NAD(+) + 4 H(+)(out)</text>
        <dbReference type="Rhea" id="RHEA:29091"/>
        <dbReference type="Rhea" id="RHEA-COMP:9565"/>
        <dbReference type="Rhea" id="RHEA-COMP:9566"/>
        <dbReference type="ChEBI" id="CHEBI:15378"/>
        <dbReference type="ChEBI" id="CHEBI:16389"/>
        <dbReference type="ChEBI" id="CHEBI:17976"/>
        <dbReference type="ChEBI" id="CHEBI:57540"/>
        <dbReference type="ChEBI" id="CHEBI:57945"/>
        <dbReference type="EC" id="7.1.1.2"/>
    </reaction>
    <physiologicalReaction direction="left-to-right" evidence="1">
        <dbReference type="Rhea" id="RHEA:29092"/>
    </physiologicalReaction>
</comment>
<comment type="subunit">
    <text evidence="2">Core subunit of respiratory chain NADH dehydrogenase (Complex I) which is composed of 45 different subunits.</text>
</comment>
<comment type="subcellular location">
    <subcellularLocation>
        <location evidence="2">Mitochondrion inner membrane</location>
        <topology evidence="3">Multi-pass membrane protein</topology>
    </subcellularLocation>
</comment>
<comment type="similarity">
    <text evidence="4">Belongs to the complex I subunit 4L family.</text>
</comment>
<reference key="1">
    <citation type="journal article" date="2000" name="Zool. Scr.">
        <title>Subordinal artiodactyl relationships in the light of phylogenetic analysis of 12 mitochondrial protein-coding genes.</title>
        <authorList>
            <person name="Ursing B.M."/>
            <person name="Slack K.E."/>
            <person name="Arnason U."/>
        </authorList>
    </citation>
    <scope>NUCLEOTIDE SEQUENCE [GENOMIC DNA]</scope>
</reference>
<reference key="2">
    <citation type="journal article" date="2004" name="Gene">
        <title>Mitogenomic analyses provide new insights into cetacean origin and evolution.</title>
        <authorList>
            <person name="Arnason U."/>
            <person name="Gullberg A."/>
            <person name="Janke A."/>
        </authorList>
    </citation>
    <scope>NUCLEOTIDE SEQUENCE [GENOMIC DNA]</scope>
</reference>
<evidence type="ECO:0000250" key="1">
    <source>
        <dbReference type="UniProtKB" id="P03901"/>
    </source>
</evidence>
<evidence type="ECO:0000250" key="2">
    <source>
        <dbReference type="UniProtKB" id="P03902"/>
    </source>
</evidence>
<evidence type="ECO:0000255" key="3"/>
<evidence type="ECO:0000305" key="4"/>
<protein>
    <recommendedName>
        <fullName>NADH-ubiquinone oxidoreductase chain 4L</fullName>
        <ecNumber>7.1.1.2</ecNumber>
    </recommendedName>
    <alternativeName>
        <fullName>NADH dehydrogenase subunit 4L</fullName>
    </alternativeName>
</protein>
<geneLocation type="mitochondrion"/>
<keyword id="KW-0249">Electron transport</keyword>
<keyword id="KW-0472">Membrane</keyword>
<keyword id="KW-0496">Mitochondrion</keyword>
<keyword id="KW-0999">Mitochondrion inner membrane</keyword>
<keyword id="KW-0520">NAD</keyword>
<keyword id="KW-1185">Reference proteome</keyword>
<keyword id="KW-0679">Respiratory chain</keyword>
<keyword id="KW-1278">Translocase</keyword>
<keyword id="KW-0812">Transmembrane</keyword>
<keyword id="KW-1133">Transmembrane helix</keyword>
<keyword id="KW-0813">Transport</keyword>
<keyword id="KW-0830">Ubiquinone</keyword>
<dbReference type="EC" id="7.1.1.2"/>
<dbReference type="EMBL" id="Y19184">
    <property type="protein sequence ID" value="CAC00510.1"/>
    <property type="molecule type" value="Genomic_DNA"/>
</dbReference>
<dbReference type="EMBL" id="AJ566364">
    <property type="protein sequence ID" value="CAD98821.1"/>
    <property type="molecule type" value="Genomic_DNA"/>
</dbReference>
<dbReference type="RefSeq" id="NP_063909.1">
    <property type="nucleotide sequence ID" value="NC_002504.1"/>
</dbReference>
<dbReference type="SMR" id="Q9MEI2"/>
<dbReference type="GeneID" id="809422"/>
<dbReference type="KEGG" id="vpc:809422"/>
<dbReference type="CTD" id="4539"/>
<dbReference type="HOGENOM" id="CLU_182394_0_0_1"/>
<dbReference type="OMA" id="MYRSHLM"/>
<dbReference type="OrthoDB" id="14164at91561"/>
<dbReference type="Proteomes" id="UP000504605">
    <property type="component" value="Mitochondrion MT"/>
</dbReference>
<dbReference type="GO" id="GO:0005743">
    <property type="term" value="C:mitochondrial inner membrane"/>
    <property type="evidence" value="ECO:0000250"/>
    <property type="project" value="UniProtKB"/>
</dbReference>
<dbReference type="GO" id="GO:0045271">
    <property type="term" value="C:respiratory chain complex I"/>
    <property type="evidence" value="ECO:0000250"/>
    <property type="project" value="UniProtKB"/>
</dbReference>
<dbReference type="GO" id="GO:0008137">
    <property type="term" value="F:NADH dehydrogenase (ubiquinone) activity"/>
    <property type="evidence" value="ECO:0000250"/>
    <property type="project" value="UniProtKB"/>
</dbReference>
<dbReference type="GO" id="GO:0042773">
    <property type="term" value="P:ATP synthesis coupled electron transport"/>
    <property type="evidence" value="ECO:0007669"/>
    <property type="project" value="InterPro"/>
</dbReference>
<dbReference type="FunFam" id="1.10.287.3510:FF:000002">
    <property type="entry name" value="NADH-ubiquinone oxidoreductase chain 4L"/>
    <property type="match status" value="1"/>
</dbReference>
<dbReference type="Gene3D" id="1.10.287.3510">
    <property type="match status" value="1"/>
</dbReference>
<dbReference type="InterPro" id="IPR001133">
    <property type="entry name" value="NADH_UbQ_OxRdtase_chain4L/K"/>
</dbReference>
<dbReference type="InterPro" id="IPR039428">
    <property type="entry name" value="NUOK/Mnh_C1-like"/>
</dbReference>
<dbReference type="PANTHER" id="PTHR11434:SF0">
    <property type="entry name" value="NADH-UBIQUINONE OXIDOREDUCTASE CHAIN 4L"/>
    <property type="match status" value="1"/>
</dbReference>
<dbReference type="PANTHER" id="PTHR11434">
    <property type="entry name" value="NADH-UBIQUINONE OXIDOREDUCTASE SUBUNIT ND4L"/>
    <property type="match status" value="1"/>
</dbReference>
<dbReference type="Pfam" id="PF00420">
    <property type="entry name" value="Oxidored_q2"/>
    <property type="match status" value="1"/>
</dbReference>
<name>NU4LM_VICPA</name>
<proteinExistence type="inferred from homology"/>
<gene>
    <name type="primary">MT-ND4L</name>
    <name type="synonym">MTND4L</name>
    <name type="synonym">NADH4L</name>
    <name type="synonym">ND4L</name>
</gene>
<feature type="chain" id="PRO_0000275037" description="NADH-ubiquinone oxidoreductase chain 4L">
    <location>
        <begin position="1"/>
        <end position="98"/>
    </location>
</feature>
<feature type="transmembrane region" description="Helical" evidence="3">
    <location>
        <begin position="1"/>
        <end position="21"/>
    </location>
</feature>
<feature type="transmembrane region" description="Helical" evidence="3">
    <location>
        <begin position="29"/>
        <end position="49"/>
    </location>
</feature>
<feature type="transmembrane region" description="Helical" evidence="3">
    <location>
        <begin position="61"/>
        <end position="81"/>
    </location>
</feature>